<feature type="chain" id="PRO_0000337038" description="Alanine- and arginine-rich domain-containing protein">
    <location>
        <begin position="1"/>
        <end position="165"/>
    </location>
</feature>
<feature type="region of interest" description="Disordered" evidence="1">
    <location>
        <begin position="136"/>
        <end position="165"/>
    </location>
</feature>
<comment type="developmental stage">
    <text evidence="2">Up-regulated during postnatal lung development.</text>
</comment>
<evidence type="ECO:0000256" key="1">
    <source>
        <dbReference type="SAM" id="MobiDB-lite"/>
    </source>
</evidence>
<evidence type="ECO:0000269" key="2">
    <source>
    </source>
</evidence>
<sequence length="165" mass="18777">MGLGDYSHCRQRMSRGLYGVSGRATLWSPAFHPVHRMPCGTWRIEAPEHVRASSPVLEHLRRQLERAFQRAAARGRARRAREAVAAVAAAAAAAREERSRARMECALARLRAELLELRFQNHQLARTLLDLNMKMQQLKKRQDQERASKPQSPQDEEMNPECGNA</sequence>
<accession>Q91ZF7</accession>
<dbReference type="EMBL" id="AY007690">
    <property type="protein sequence ID" value="AAG15560.1"/>
    <property type="molecule type" value="mRNA"/>
</dbReference>
<dbReference type="RefSeq" id="NP_659561.1">
    <property type="nucleotide sequence ID" value="NM_145093.2"/>
</dbReference>
<dbReference type="SMR" id="Q91ZF7"/>
<dbReference type="FunCoup" id="Q91ZF7">
    <property type="interactions" value="9"/>
</dbReference>
<dbReference type="STRING" id="10116.ENSRNOP00000006257"/>
<dbReference type="PaxDb" id="10116-ENSRNOP00000006257"/>
<dbReference type="GeneID" id="246323"/>
<dbReference type="KEGG" id="rno:246323"/>
<dbReference type="UCSC" id="RGD:631378">
    <property type="organism name" value="rat"/>
</dbReference>
<dbReference type="AGR" id="RGD:631378"/>
<dbReference type="CTD" id="441376"/>
<dbReference type="RGD" id="631378">
    <property type="gene designation" value="Aard"/>
</dbReference>
<dbReference type="VEuPathDB" id="HostDB:ENSRNOG00000004708"/>
<dbReference type="eggNOG" id="ENOG502SG9F">
    <property type="taxonomic scope" value="Eukaryota"/>
</dbReference>
<dbReference type="HOGENOM" id="CLU_142929_0_0_1"/>
<dbReference type="InParanoid" id="Q91ZF7"/>
<dbReference type="OrthoDB" id="82596at9989"/>
<dbReference type="PhylomeDB" id="Q91ZF7"/>
<dbReference type="TreeFam" id="TF339066"/>
<dbReference type="PRO" id="PR:Q91ZF7"/>
<dbReference type="Proteomes" id="UP000002494">
    <property type="component" value="Chromosome 7"/>
</dbReference>
<dbReference type="Bgee" id="ENSRNOG00000004708">
    <property type="expression patterns" value="Expressed in testis and 16 other cell types or tissues"/>
</dbReference>
<dbReference type="GO" id="GO:0030324">
    <property type="term" value="P:lung development"/>
    <property type="evidence" value="ECO:0000270"/>
    <property type="project" value="RGD"/>
</dbReference>
<dbReference type="GO" id="GO:0033574">
    <property type="term" value="P:response to testosterone"/>
    <property type="evidence" value="ECO:0000266"/>
    <property type="project" value="RGD"/>
</dbReference>
<dbReference type="InterPro" id="IPR051771">
    <property type="entry name" value="FAM167_domain"/>
</dbReference>
<dbReference type="PANTHER" id="PTHR32289:SF2">
    <property type="entry name" value="ALANINE AND ARGININE-RICH DOMAIN-CONTAINING PROTEIN"/>
    <property type="match status" value="1"/>
</dbReference>
<dbReference type="PANTHER" id="PTHR32289">
    <property type="entry name" value="PROTEIN FAM167A"/>
    <property type="match status" value="1"/>
</dbReference>
<name>AARD_RAT</name>
<protein>
    <recommendedName>
        <fullName>Alanine- and arginine-rich domain-containing protein</fullName>
    </recommendedName>
    <alternativeName>
        <fullName>rA5D3</fullName>
    </alternativeName>
</protein>
<gene>
    <name type="primary">Aard</name>
    <name type="synonym">A5d3</name>
</gene>
<keyword id="KW-1185">Reference proteome</keyword>
<proteinExistence type="evidence at transcript level"/>
<reference key="1">
    <citation type="journal article" date="2002" name="Biochim. Biophys. Acta">
        <title>Molecular cloning and characterization of a novel gene upregulated early during postnatal rat lung development.</title>
        <authorList>
            <person name="Blomberg L.A."/>
            <person name="Chan W.Y."/>
            <person name="Clerch L.B."/>
            <person name="Massaro D."/>
        </authorList>
    </citation>
    <scope>NUCLEOTIDE SEQUENCE [MRNA]</scope>
    <scope>DEVELOPMENTAL STAGE</scope>
    <source>
        <strain>Sprague-Dawley</strain>
        <tissue>Lung</tissue>
    </source>
</reference>
<organism>
    <name type="scientific">Rattus norvegicus</name>
    <name type="common">Rat</name>
    <dbReference type="NCBI Taxonomy" id="10116"/>
    <lineage>
        <taxon>Eukaryota</taxon>
        <taxon>Metazoa</taxon>
        <taxon>Chordata</taxon>
        <taxon>Craniata</taxon>
        <taxon>Vertebrata</taxon>
        <taxon>Euteleostomi</taxon>
        <taxon>Mammalia</taxon>
        <taxon>Eutheria</taxon>
        <taxon>Euarchontoglires</taxon>
        <taxon>Glires</taxon>
        <taxon>Rodentia</taxon>
        <taxon>Myomorpha</taxon>
        <taxon>Muroidea</taxon>
        <taxon>Muridae</taxon>
        <taxon>Murinae</taxon>
        <taxon>Rattus</taxon>
    </lineage>
</organism>